<gene>
    <name evidence="1" type="primary">rnfE</name>
    <name type="ordered locus">Shew_2071</name>
</gene>
<keyword id="KW-0997">Cell inner membrane</keyword>
<keyword id="KW-1003">Cell membrane</keyword>
<keyword id="KW-0249">Electron transport</keyword>
<keyword id="KW-0472">Membrane</keyword>
<keyword id="KW-1185">Reference proteome</keyword>
<keyword id="KW-1278">Translocase</keyword>
<keyword id="KW-0812">Transmembrane</keyword>
<keyword id="KW-1133">Transmembrane helix</keyword>
<keyword id="KW-0813">Transport</keyword>
<dbReference type="EC" id="7.-.-.-" evidence="1"/>
<dbReference type="EMBL" id="CP000606">
    <property type="protein sequence ID" value="ABO23937.1"/>
    <property type="molecule type" value="Genomic_DNA"/>
</dbReference>
<dbReference type="RefSeq" id="WP_011865869.1">
    <property type="nucleotide sequence ID" value="NC_009092.1"/>
</dbReference>
<dbReference type="SMR" id="A3QEN9"/>
<dbReference type="STRING" id="323850.Shew_2071"/>
<dbReference type="KEGG" id="slo:Shew_2071"/>
<dbReference type="eggNOG" id="COG4660">
    <property type="taxonomic scope" value="Bacteria"/>
</dbReference>
<dbReference type="HOGENOM" id="CLU_046659_1_0_6"/>
<dbReference type="OrthoDB" id="9782945at2"/>
<dbReference type="Proteomes" id="UP000001558">
    <property type="component" value="Chromosome"/>
</dbReference>
<dbReference type="GO" id="GO:0005886">
    <property type="term" value="C:plasma membrane"/>
    <property type="evidence" value="ECO:0007669"/>
    <property type="project" value="UniProtKB-SubCell"/>
</dbReference>
<dbReference type="GO" id="GO:0022900">
    <property type="term" value="P:electron transport chain"/>
    <property type="evidence" value="ECO:0007669"/>
    <property type="project" value="UniProtKB-UniRule"/>
</dbReference>
<dbReference type="HAMAP" id="MF_00478">
    <property type="entry name" value="RsxE_RnfE"/>
    <property type="match status" value="1"/>
</dbReference>
<dbReference type="InterPro" id="IPR003667">
    <property type="entry name" value="NqrDE/RnfAE"/>
</dbReference>
<dbReference type="InterPro" id="IPR010968">
    <property type="entry name" value="RnfE"/>
</dbReference>
<dbReference type="NCBIfam" id="NF009070">
    <property type="entry name" value="PRK12405.1"/>
    <property type="match status" value="1"/>
</dbReference>
<dbReference type="NCBIfam" id="TIGR01948">
    <property type="entry name" value="rnfE"/>
    <property type="match status" value="1"/>
</dbReference>
<dbReference type="PANTHER" id="PTHR30586">
    <property type="entry name" value="ELECTRON TRANSPORT COMPLEX PROTEIN RNFE"/>
    <property type="match status" value="1"/>
</dbReference>
<dbReference type="PANTHER" id="PTHR30586:SF0">
    <property type="entry name" value="ION-TRANSLOCATING OXIDOREDUCTASE COMPLEX SUBUNIT E"/>
    <property type="match status" value="1"/>
</dbReference>
<dbReference type="Pfam" id="PF02508">
    <property type="entry name" value="Rnf-Nqr"/>
    <property type="match status" value="1"/>
</dbReference>
<dbReference type="PIRSF" id="PIRSF006102">
    <property type="entry name" value="NQR_DE"/>
    <property type="match status" value="1"/>
</dbReference>
<reference key="1">
    <citation type="submission" date="2007-03" db="EMBL/GenBank/DDBJ databases">
        <title>Complete sequence of Shewanella loihica PV-4.</title>
        <authorList>
            <consortium name="US DOE Joint Genome Institute"/>
            <person name="Copeland A."/>
            <person name="Lucas S."/>
            <person name="Lapidus A."/>
            <person name="Barry K."/>
            <person name="Detter J.C."/>
            <person name="Glavina del Rio T."/>
            <person name="Hammon N."/>
            <person name="Israni S."/>
            <person name="Dalin E."/>
            <person name="Tice H."/>
            <person name="Pitluck S."/>
            <person name="Chain P."/>
            <person name="Malfatti S."/>
            <person name="Shin M."/>
            <person name="Vergez L."/>
            <person name="Schmutz J."/>
            <person name="Larimer F."/>
            <person name="Land M."/>
            <person name="Hauser L."/>
            <person name="Kyrpides N."/>
            <person name="Mikhailova N."/>
            <person name="Romine M.F."/>
            <person name="Serres G."/>
            <person name="Fredrickson J."/>
            <person name="Tiedje J."/>
            <person name="Richardson P."/>
        </authorList>
    </citation>
    <scope>NUCLEOTIDE SEQUENCE [LARGE SCALE GENOMIC DNA]</scope>
    <source>
        <strain>ATCC BAA-1088 / PV-4</strain>
    </source>
</reference>
<name>RNFE_SHELP</name>
<organism>
    <name type="scientific">Shewanella loihica (strain ATCC BAA-1088 / PV-4)</name>
    <dbReference type="NCBI Taxonomy" id="323850"/>
    <lineage>
        <taxon>Bacteria</taxon>
        <taxon>Pseudomonadati</taxon>
        <taxon>Pseudomonadota</taxon>
        <taxon>Gammaproteobacteria</taxon>
        <taxon>Alteromonadales</taxon>
        <taxon>Shewanellaceae</taxon>
        <taxon>Shewanella</taxon>
    </lineage>
</organism>
<accession>A3QEN9</accession>
<feature type="chain" id="PRO_1000014102" description="Ion-translocating oxidoreductase complex subunit E">
    <location>
        <begin position="1"/>
        <end position="232"/>
    </location>
</feature>
<feature type="transmembrane region" description="Helical" evidence="1">
    <location>
        <begin position="18"/>
        <end position="38"/>
    </location>
</feature>
<feature type="transmembrane region" description="Helical" evidence="1">
    <location>
        <begin position="39"/>
        <end position="59"/>
    </location>
</feature>
<feature type="transmembrane region" description="Helical" evidence="1">
    <location>
        <begin position="69"/>
        <end position="89"/>
    </location>
</feature>
<feature type="transmembrane region" description="Helical" evidence="1">
    <location>
        <begin position="93"/>
        <end position="113"/>
    </location>
</feature>
<feature type="transmembrane region" description="Helical" evidence="1">
    <location>
        <begin position="127"/>
        <end position="147"/>
    </location>
</feature>
<feature type="transmembrane region" description="Helical" evidence="1">
    <location>
        <begin position="182"/>
        <end position="202"/>
    </location>
</feature>
<proteinExistence type="inferred from homology"/>
<protein>
    <recommendedName>
        <fullName evidence="1">Ion-translocating oxidoreductase complex subunit E</fullName>
        <ecNumber evidence="1">7.-.-.-</ecNumber>
    </recommendedName>
    <alternativeName>
        <fullName evidence="1">Rnf electron transport complex subunit E</fullName>
    </alternativeName>
</protein>
<comment type="function">
    <text evidence="1">Part of a membrane-bound complex that couples electron transfer with translocation of ions across the membrane.</text>
</comment>
<comment type="subunit">
    <text evidence="1">The complex is composed of six subunits: RnfA, RnfB, RnfC, RnfD, RnfE and RnfG.</text>
</comment>
<comment type="subcellular location">
    <subcellularLocation>
        <location evidence="1">Cell inner membrane</location>
        <topology evidence="1">Multi-pass membrane protein</topology>
    </subcellularLocation>
</comment>
<comment type="similarity">
    <text evidence="1">Belongs to the NqrDE/RnfAE family.</text>
</comment>
<sequence length="232" mass="24923">MSNYRDIAWQGLWKNNPGLVQLLGLCPLLAVTATLTNAIGLGLATLVVLVGSNVLVSLVREFVPKEIRIPVFVMIIAALVTCVQLLINAYAYGLYLSLGIFLPLIVTNCVIIGRAEAFASRNSVVKAAFDGLMMGLGFTLVLMLLGACREILGQGTLFDGADLLLGDWAKGLTIHLWQVDTNFLLAMLPPGAFIAMGFLIAIKNMIDKQLEARKPALEAAPAVTRARITKVS</sequence>
<evidence type="ECO:0000255" key="1">
    <source>
        <dbReference type="HAMAP-Rule" id="MF_00478"/>
    </source>
</evidence>